<reference key="1">
    <citation type="submission" date="2001-11" db="EMBL/GenBank/DDBJ databases">
        <title>Nucleotide sequence and analysis of 16.25 kilobase pairs of the African swine fever virus genome that span the central variable region.</title>
        <authorList>
            <person name="Roberts P.C."/>
            <person name="Lu Z."/>
            <person name="Rock D.L."/>
        </authorList>
    </citation>
    <scope>NUCLEOTIDE SEQUENCE [GENOMIC DNA]</scope>
</reference>
<reference key="2">
    <citation type="submission" date="2003-03" db="EMBL/GenBank/DDBJ databases">
        <title>African swine fever virus genomes.</title>
        <authorList>
            <person name="Kutish G.F."/>
            <person name="Rock D.L."/>
        </authorList>
    </citation>
    <scope>NUCLEOTIDE SEQUENCE [LARGE SCALE GENOMIC DNA]</scope>
</reference>
<gene>
    <name type="ordered locus">Mal-082</name>
    <name type="ORF">L09IL</name>
</gene>
<proteinExistence type="inferred from homology"/>
<name>TPRT_ASFM2</name>
<comment type="function">
    <text evidence="1">Trans-prenyltransferase that catalyzes the sequential condensation of isopentenyl diphosphate (IPP) with different allylic diphosphates, such as dimethylallyl diphosphate (DMAPP), geranyl diphosphate (GPP), farnesyl diphosphate (FPP) and geranylgeranyl diphosphate (GGPP), farnesyl diphosphate being the best allylic substrate.</text>
</comment>
<comment type="catalytic activity">
    <reaction>
        <text>isopentenyl diphosphate + dimethylallyl diphosphate = (2E)-geranyl diphosphate + diphosphate</text>
        <dbReference type="Rhea" id="RHEA:22408"/>
        <dbReference type="ChEBI" id="CHEBI:33019"/>
        <dbReference type="ChEBI" id="CHEBI:57623"/>
        <dbReference type="ChEBI" id="CHEBI:58057"/>
        <dbReference type="ChEBI" id="CHEBI:128769"/>
        <dbReference type="EC" id="2.5.1.1"/>
    </reaction>
</comment>
<comment type="catalytic activity">
    <reaction>
        <text>isopentenyl diphosphate + (2E)-geranyl diphosphate = (2E,6E)-farnesyl diphosphate + diphosphate</text>
        <dbReference type="Rhea" id="RHEA:19361"/>
        <dbReference type="ChEBI" id="CHEBI:33019"/>
        <dbReference type="ChEBI" id="CHEBI:58057"/>
        <dbReference type="ChEBI" id="CHEBI:128769"/>
        <dbReference type="ChEBI" id="CHEBI:175763"/>
        <dbReference type="EC" id="2.5.1.10"/>
    </reaction>
</comment>
<comment type="catalytic activity">
    <reaction>
        <text>isopentenyl diphosphate + (2E,6E)-farnesyl diphosphate = (2E,6E,10E)-geranylgeranyl diphosphate + diphosphate</text>
        <dbReference type="Rhea" id="RHEA:17653"/>
        <dbReference type="ChEBI" id="CHEBI:33019"/>
        <dbReference type="ChEBI" id="CHEBI:58756"/>
        <dbReference type="ChEBI" id="CHEBI:128769"/>
        <dbReference type="ChEBI" id="CHEBI:175763"/>
        <dbReference type="EC" id="2.5.1.29"/>
    </reaction>
</comment>
<comment type="catalytic activity">
    <reaction>
        <text>isopentenyl diphosphate + (2E,6E,10E)-geranylgeranyl diphosphate = (2E,6E,10E,14E)-geranylfarnesyl diphosphate + diphosphate</text>
        <dbReference type="Rhea" id="RHEA:25694"/>
        <dbReference type="ChEBI" id="CHEBI:33019"/>
        <dbReference type="ChEBI" id="CHEBI:57907"/>
        <dbReference type="ChEBI" id="CHEBI:58756"/>
        <dbReference type="ChEBI" id="CHEBI:128769"/>
    </reaction>
</comment>
<comment type="cofactor">
    <cofactor evidence="1">
        <name>Mg(2+)</name>
        <dbReference type="ChEBI" id="CHEBI:18420"/>
    </cofactor>
    <text evidence="1">Binds 2 Mg(2+) ions per subunit.</text>
</comment>
<comment type="pathway">
    <text>Isoprenoid biosynthesis; farnesyl diphosphate biosynthesis; farnesyl diphosphate from geranyl diphosphate and isopentenyl diphosphate: step 1/1.</text>
</comment>
<comment type="pathway">
    <text>Isoprenoid biosynthesis; geranyl diphosphate biosynthesis; geranyl diphosphate from dimethylallyl diphosphate and isopentenyl diphosphate: step 1/1.</text>
</comment>
<comment type="pathway">
    <text>Isoprenoid biosynthesis; geranylgeranyl diphosphate biosynthesis; geranylgeranyl diphosphate from farnesyl diphosphate and isopentenyl diphosphate: step 1/1.</text>
</comment>
<comment type="subcellular location">
    <subcellularLocation>
        <location>Host endoplasmic reticulum</location>
    </subcellularLocation>
    <subcellularLocation>
        <location evidence="1">Host membrane</location>
        <topology evidence="1">Single-pass membrane protein</topology>
    </subcellularLocation>
</comment>
<comment type="induction">
    <text evidence="5">Expressed in the late phase of the viral replicative cycle.</text>
</comment>
<comment type="similarity">
    <text evidence="5">Belongs to the FPP/GGPP synthase family. Asfivirus trans-prenyltransferase subfamily.</text>
</comment>
<evidence type="ECO:0000250" key="1"/>
<evidence type="ECO:0000250" key="2">
    <source>
        <dbReference type="UniProtKB" id="P14324"/>
    </source>
</evidence>
<evidence type="ECO:0000250" key="3">
    <source>
        <dbReference type="UniProtKB" id="Q12051"/>
    </source>
</evidence>
<evidence type="ECO:0000255" key="4"/>
<evidence type="ECO:0000305" key="5"/>
<protein>
    <recommendedName>
        <fullName>Trans-prenyltransferase</fullName>
        <ecNumber>2.5.1.-</ecNumber>
    </recommendedName>
    <alternativeName>
        <fullName>(2E,6E)-farnesyl diphosphate synthase</fullName>
    </alternativeName>
    <alternativeName>
        <fullName>Dimethylallyltranstransferase</fullName>
        <ecNumber>2.5.1.1</ecNumber>
    </alternativeName>
    <alternativeName>
        <fullName>Farnesyl diphosphate synthase</fullName>
    </alternativeName>
    <alternativeName>
        <fullName>Farnesyltranstransferase</fullName>
        <ecNumber>2.5.1.29</ecNumber>
    </alternativeName>
    <alternativeName>
        <fullName>Geranyltranstransferase</fullName>
        <ecNumber>2.5.1.10</ecNumber>
    </alternativeName>
    <alternativeName>
        <fullName>Polyprenyl-diphosphate synthase</fullName>
    </alternativeName>
</protein>
<dbReference type="EC" id="2.5.1.-"/>
<dbReference type="EC" id="2.5.1.1"/>
<dbReference type="EC" id="2.5.1.29"/>
<dbReference type="EC" id="2.5.1.10"/>
<dbReference type="EMBL" id="L00966">
    <property type="protein sequence ID" value="AAL31326.1"/>
    <property type="molecule type" value="Genomic_DNA"/>
</dbReference>
<dbReference type="EMBL" id="AY261361">
    <property type="status" value="NOT_ANNOTATED_CDS"/>
    <property type="molecule type" value="Genomic_DNA"/>
</dbReference>
<dbReference type="SMR" id="Q8V9T7"/>
<dbReference type="UniPathway" id="UPA00259">
    <property type="reaction ID" value="UER00368"/>
</dbReference>
<dbReference type="UniPathway" id="UPA00260">
    <property type="reaction ID" value="UER00369"/>
</dbReference>
<dbReference type="UniPathway" id="UPA00389">
    <property type="reaction ID" value="UER00564"/>
</dbReference>
<dbReference type="Proteomes" id="UP000000860">
    <property type="component" value="Segment"/>
</dbReference>
<dbReference type="GO" id="GO:0044165">
    <property type="term" value="C:host cell endoplasmic reticulum"/>
    <property type="evidence" value="ECO:0007669"/>
    <property type="project" value="UniProtKB-SubCell"/>
</dbReference>
<dbReference type="GO" id="GO:0033644">
    <property type="term" value="C:host cell membrane"/>
    <property type="evidence" value="ECO:0007669"/>
    <property type="project" value="UniProtKB-SubCell"/>
</dbReference>
<dbReference type="GO" id="GO:0016020">
    <property type="term" value="C:membrane"/>
    <property type="evidence" value="ECO:0007669"/>
    <property type="project" value="UniProtKB-KW"/>
</dbReference>
<dbReference type="GO" id="GO:0004337">
    <property type="term" value="F:(2E,6E)-farnesyl diphosphate synthase activity"/>
    <property type="evidence" value="ECO:0007669"/>
    <property type="project" value="UniProtKB-EC"/>
</dbReference>
<dbReference type="GO" id="GO:0004161">
    <property type="term" value="F:dimethylallyltranstransferase activity"/>
    <property type="evidence" value="ECO:0007669"/>
    <property type="project" value="UniProtKB-EC"/>
</dbReference>
<dbReference type="GO" id="GO:0044687">
    <property type="term" value="F:geranylfarnesyl diphosphate synthase activity"/>
    <property type="evidence" value="ECO:0007669"/>
    <property type="project" value="RHEA"/>
</dbReference>
<dbReference type="GO" id="GO:0004311">
    <property type="term" value="F:geranylgeranyl diphosphate synthase activity"/>
    <property type="evidence" value="ECO:0007669"/>
    <property type="project" value="UniProtKB-EC"/>
</dbReference>
<dbReference type="GO" id="GO:0046872">
    <property type="term" value="F:metal ion binding"/>
    <property type="evidence" value="ECO:0007669"/>
    <property type="project" value="UniProtKB-KW"/>
</dbReference>
<dbReference type="GO" id="GO:0045337">
    <property type="term" value="P:farnesyl diphosphate biosynthetic process"/>
    <property type="evidence" value="ECO:0007669"/>
    <property type="project" value="UniProtKB-UniPathway"/>
</dbReference>
<dbReference type="GO" id="GO:0033384">
    <property type="term" value="P:geranyl diphosphate biosynthetic process"/>
    <property type="evidence" value="ECO:0007669"/>
    <property type="project" value="UniProtKB-UniPathway"/>
</dbReference>
<dbReference type="GO" id="GO:0033386">
    <property type="term" value="P:geranylgeranyl diphosphate biosynthetic process"/>
    <property type="evidence" value="ECO:0007669"/>
    <property type="project" value="UniProtKB-UniPathway"/>
</dbReference>
<dbReference type="Gene3D" id="1.10.600.10">
    <property type="entry name" value="Farnesyl Diphosphate Synthase"/>
    <property type="match status" value="1"/>
</dbReference>
<dbReference type="InterPro" id="IPR008949">
    <property type="entry name" value="Isoprenoid_synthase_dom_sf"/>
</dbReference>
<dbReference type="InterPro" id="IPR000092">
    <property type="entry name" value="Polyprenyl_synt"/>
</dbReference>
<dbReference type="PANTHER" id="PTHR43281">
    <property type="entry name" value="FARNESYL DIPHOSPHATE SYNTHASE"/>
    <property type="match status" value="1"/>
</dbReference>
<dbReference type="PANTHER" id="PTHR43281:SF1">
    <property type="entry name" value="FARNESYL DIPHOSPHATE SYNTHASE"/>
    <property type="match status" value="1"/>
</dbReference>
<dbReference type="Pfam" id="PF00348">
    <property type="entry name" value="polyprenyl_synt"/>
    <property type="match status" value="1"/>
</dbReference>
<dbReference type="SUPFAM" id="SSF48576">
    <property type="entry name" value="Terpenoid synthases"/>
    <property type="match status" value="1"/>
</dbReference>
<dbReference type="PROSITE" id="PS00444">
    <property type="entry name" value="POLYPRENYL_SYNTHASE_2"/>
    <property type="match status" value="1"/>
</dbReference>
<organism>
    <name type="scientific">African swine fever virus (isolate Tick/Malawi/Lil 20-1/1983)</name>
    <name type="common">ASFV</name>
    <dbReference type="NCBI Taxonomy" id="10500"/>
    <lineage>
        <taxon>Viruses</taxon>
        <taxon>Varidnaviria</taxon>
        <taxon>Bamfordvirae</taxon>
        <taxon>Nucleocytoviricota</taxon>
        <taxon>Pokkesviricetes</taxon>
        <taxon>Asfuvirales</taxon>
        <taxon>Asfarviridae</taxon>
        <taxon>Asfivirus</taxon>
        <taxon>African swine fever virus</taxon>
    </lineage>
</organism>
<accession>Q8V9T7</accession>
<sequence length="318" mass="35751">MLHLIYISIIVVLIIILISYTHKPKYFRITAPRSVTLFHGIHPLNPKNYKTFSEEFETILNNAIEDGDFKGQLTEPCSYALRGGKYIRPIILMEIVRACQLQHSFGAPIYPAEAALAVEYFHVASLIIDDMPSFDNDVKRRNKDTVWARFGVAKAQMSALALTMQGFQNICRQIDWIKEHCPRFPDPNQLGALLCTFVSHSLNSAGSGQLVDTPEKTIPFFKIAFIMGWVLGTGTIEDIGVIERAAHCFGNAFQLADDIKDHDTDTGGNYAKIHGKRKTFDVVAQSLQECKKILQGKKIYTSIWNEIFQKVINVALGT</sequence>
<keyword id="KW-1038">Host endoplasmic reticulum</keyword>
<keyword id="KW-1043">Host membrane</keyword>
<keyword id="KW-0414">Isoprene biosynthesis</keyword>
<keyword id="KW-0426">Late protein</keyword>
<keyword id="KW-0460">Magnesium</keyword>
<keyword id="KW-0472">Membrane</keyword>
<keyword id="KW-0479">Metal-binding</keyword>
<keyword id="KW-0808">Transferase</keyword>
<keyword id="KW-0812">Transmembrane</keyword>
<keyword id="KW-1133">Transmembrane helix</keyword>
<organismHost>
    <name type="scientific">Ornithodoros</name>
    <name type="common">relapsing fever ticks</name>
    <dbReference type="NCBI Taxonomy" id="6937"/>
</organismHost>
<organismHost>
    <name type="scientific">Phacochoerus aethiopicus</name>
    <name type="common">Warthog</name>
    <dbReference type="NCBI Taxonomy" id="85517"/>
</organismHost>
<organismHost>
    <name type="scientific">Phacochoerus africanus</name>
    <name type="common">Warthog</name>
    <dbReference type="NCBI Taxonomy" id="41426"/>
</organismHost>
<organismHost>
    <name type="scientific">Potamochoerus larvatus</name>
    <name type="common">Bushpig</name>
    <dbReference type="NCBI Taxonomy" id="273792"/>
</organismHost>
<organismHost>
    <name type="scientific">Sus scrofa</name>
    <name type="common">Pig</name>
    <dbReference type="NCBI Taxonomy" id="9823"/>
</organismHost>
<feature type="chain" id="PRO_0000373157" description="Trans-prenyltransferase">
    <location>
        <begin position="1"/>
        <end position="318"/>
    </location>
</feature>
<feature type="transmembrane region" description="Helical" evidence="4">
    <location>
        <begin position="1"/>
        <end position="21"/>
    </location>
</feature>
<feature type="binding site" evidence="2">
    <location>
        <position position="85"/>
    </location>
    <ligand>
        <name>isopentenyl diphosphate</name>
        <dbReference type="ChEBI" id="CHEBI:128769"/>
    </ligand>
</feature>
<feature type="binding site" evidence="2">
    <location>
        <position position="88"/>
    </location>
    <ligand>
        <name>isopentenyl diphosphate</name>
        <dbReference type="ChEBI" id="CHEBI:128769"/>
    </ligand>
</feature>
<feature type="binding site" evidence="3">
    <location>
        <position position="122"/>
    </location>
    <ligand>
        <name>isopentenyl diphosphate</name>
        <dbReference type="ChEBI" id="CHEBI:128769"/>
    </ligand>
</feature>
<feature type="binding site" evidence="2">
    <location>
        <position position="129"/>
    </location>
    <ligand>
        <name>Mg(2+)</name>
        <dbReference type="ChEBI" id="CHEBI:18420"/>
        <label>1</label>
    </ligand>
</feature>
<feature type="binding site" evidence="2">
    <location>
        <position position="129"/>
    </location>
    <ligand>
        <name>Mg(2+)</name>
        <dbReference type="ChEBI" id="CHEBI:18420"/>
        <label>2</label>
    </ligand>
</feature>
<feature type="binding site" evidence="2">
    <location>
        <position position="135"/>
    </location>
    <ligand>
        <name>Mg(2+)</name>
        <dbReference type="ChEBI" id="CHEBI:18420"/>
        <label>1</label>
    </ligand>
</feature>
<feature type="binding site" evidence="2">
    <location>
        <position position="135"/>
    </location>
    <ligand>
        <name>Mg(2+)</name>
        <dbReference type="ChEBI" id="CHEBI:18420"/>
        <label>2</label>
    </ligand>
</feature>
<feature type="binding site" evidence="1">
    <location>
        <position position="140"/>
    </location>
    <ligand>
        <name>dimethylallyl diphosphate</name>
        <dbReference type="ChEBI" id="CHEBI:57623"/>
    </ligand>
</feature>
<feature type="binding site" evidence="2">
    <location>
        <position position="141"/>
    </location>
    <ligand>
        <name>isopentenyl diphosphate</name>
        <dbReference type="ChEBI" id="CHEBI:128769"/>
    </ligand>
</feature>
<feature type="binding site" evidence="1">
    <location>
        <position position="216"/>
    </location>
    <ligand>
        <name>dimethylallyl diphosphate</name>
        <dbReference type="ChEBI" id="CHEBI:57623"/>
    </ligand>
</feature>
<feature type="binding site" evidence="1">
    <location>
        <position position="217"/>
    </location>
    <ligand>
        <name>dimethylallyl diphosphate</name>
        <dbReference type="ChEBI" id="CHEBI:57623"/>
    </ligand>
</feature>
<feature type="binding site" evidence="1">
    <location>
        <position position="254"/>
    </location>
    <ligand>
        <name>dimethylallyl diphosphate</name>
        <dbReference type="ChEBI" id="CHEBI:57623"/>
    </ligand>
</feature>